<gene>
    <name evidence="1" type="primary">allK</name>
    <name type="synonym">arcC</name>
    <name type="ordered locus">Z0676</name>
    <name type="ordered locus">ECs0583</name>
</gene>
<dbReference type="EC" id="2.7.2.2" evidence="1"/>
<dbReference type="EMBL" id="AE005174">
    <property type="protein sequence ID" value="AAG54878.1"/>
    <property type="molecule type" value="Genomic_DNA"/>
</dbReference>
<dbReference type="EMBL" id="BA000007">
    <property type="protein sequence ID" value="BAB34006.1"/>
    <property type="molecule type" value="Genomic_DNA"/>
</dbReference>
<dbReference type="PIR" id="B85552">
    <property type="entry name" value="B85552"/>
</dbReference>
<dbReference type="PIR" id="G90701">
    <property type="entry name" value="G90701"/>
</dbReference>
<dbReference type="RefSeq" id="WP_000855395.1">
    <property type="nucleotide sequence ID" value="NZ_VOAI01000030.1"/>
</dbReference>
<dbReference type="SMR" id="Q8XCV5"/>
<dbReference type="STRING" id="155864.Z0676"/>
<dbReference type="KEGG" id="ece:Z0676"/>
<dbReference type="KEGG" id="ecs:ECs_0583"/>
<dbReference type="PATRIC" id="fig|386585.9.peg.690"/>
<dbReference type="eggNOG" id="COG0549">
    <property type="taxonomic scope" value="Bacteria"/>
</dbReference>
<dbReference type="HOGENOM" id="CLU_076278_0_1_6"/>
<dbReference type="OMA" id="EANNWIM"/>
<dbReference type="UniPathway" id="UPA00395"/>
<dbReference type="Proteomes" id="UP000000558">
    <property type="component" value="Chromosome"/>
</dbReference>
<dbReference type="Proteomes" id="UP000002519">
    <property type="component" value="Chromosome"/>
</dbReference>
<dbReference type="GO" id="GO:0005829">
    <property type="term" value="C:cytosol"/>
    <property type="evidence" value="ECO:0007669"/>
    <property type="project" value="TreeGrafter"/>
</dbReference>
<dbReference type="GO" id="GO:0005524">
    <property type="term" value="F:ATP binding"/>
    <property type="evidence" value="ECO:0007669"/>
    <property type="project" value="UniProtKB-KW"/>
</dbReference>
<dbReference type="GO" id="GO:0008804">
    <property type="term" value="F:carbamate kinase activity"/>
    <property type="evidence" value="ECO:0007669"/>
    <property type="project" value="UniProtKB-EC"/>
</dbReference>
<dbReference type="GO" id="GO:0019546">
    <property type="term" value="P:arginine deiminase pathway"/>
    <property type="evidence" value="ECO:0007669"/>
    <property type="project" value="TreeGrafter"/>
</dbReference>
<dbReference type="CDD" id="cd04235">
    <property type="entry name" value="AAK_CK"/>
    <property type="match status" value="1"/>
</dbReference>
<dbReference type="FunFam" id="3.40.1160.10:FF:000007">
    <property type="entry name" value="Carbamate kinase"/>
    <property type="match status" value="1"/>
</dbReference>
<dbReference type="Gene3D" id="3.40.1160.10">
    <property type="entry name" value="Acetylglutamate kinase-like"/>
    <property type="match status" value="1"/>
</dbReference>
<dbReference type="InterPro" id="IPR036393">
    <property type="entry name" value="AceGlu_kinase-like_sf"/>
</dbReference>
<dbReference type="InterPro" id="IPR001048">
    <property type="entry name" value="Asp/Glu/Uridylate_kinase"/>
</dbReference>
<dbReference type="InterPro" id="IPR003964">
    <property type="entry name" value="Carb_kinase"/>
</dbReference>
<dbReference type="NCBIfam" id="TIGR00746">
    <property type="entry name" value="arcC"/>
    <property type="match status" value="1"/>
</dbReference>
<dbReference type="NCBIfam" id="NF006926">
    <property type="entry name" value="PRK09411.1"/>
    <property type="match status" value="1"/>
</dbReference>
<dbReference type="NCBIfam" id="NF009008">
    <property type="entry name" value="PRK12354.1"/>
    <property type="match status" value="1"/>
</dbReference>
<dbReference type="PANTHER" id="PTHR30409">
    <property type="entry name" value="CARBAMATE KINASE"/>
    <property type="match status" value="1"/>
</dbReference>
<dbReference type="PANTHER" id="PTHR30409:SF1">
    <property type="entry name" value="CARBAMATE KINASE-RELATED"/>
    <property type="match status" value="1"/>
</dbReference>
<dbReference type="Pfam" id="PF00696">
    <property type="entry name" value="AA_kinase"/>
    <property type="match status" value="1"/>
</dbReference>
<dbReference type="PIRSF" id="PIRSF000723">
    <property type="entry name" value="Carbamate_kin"/>
    <property type="match status" value="1"/>
</dbReference>
<dbReference type="PRINTS" id="PR01469">
    <property type="entry name" value="CARBMTKINASE"/>
</dbReference>
<dbReference type="SUPFAM" id="SSF53633">
    <property type="entry name" value="Carbamate kinase-like"/>
    <property type="match status" value="1"/>
</dbReference>
<comment type="function">
    <text evidence="1">Kinase involved in the anaerobic nitrogen utilization via the assimilation of allantoin. Catalyzes the transfer of a phosphate group from carbamoyl phosphate to ADP to produce ATP and leave carbamate, which spontaneously hydrolyzes to ammonia and hydrogencarbonate.</text>
</comment>
<comment type="catalytic activity">
    <reaction evidence="1">
        <text>hydrogencarbonate + NH4(+) + ATP = carbamoyl phosphate + ADP + H2O + H(+)</text>
        <dbReference type="Rhea" id="RHEA:10152"/>
        <dbReference type="ChEBI" id="CHEBI:15377"/>
        <dbReference type="ChEBI" id="CHEBI:15378"/>
        <dbReference type="ChEBI" id="CHEBI:17544"/>
        <dbReference type="ChEBI" id="CHEBI:28938"/>
        <dbReference type="ChEBI" id="CHEBI:30616"/>
        <dbReference type="ChEBI" id="CHEBI:58228"/>
        <dbReference type="ChEBI" id="CHEBI:456216"/>
        <dbReference type="EC" id="2.7.2.2"/>
    </reaction>
    <physiologicalReaction direction="right-to-left" evidence="1">
        <dbReference type="Rhea" id="RHEA:10154"/>
    </physiologicalReaction>
</comment>
<comment type="catalytic activity">
    <reaction evidence="1">
        <text>carbamate + ATP = carbamoyl phosphate + ADP</text>
        <dbReference type="Rhea" id="RHEA:30755"/>
        <dbReference type="ChEBI" id="CHEBI:13941"/>
        <dbReference type="ChEBI" id="CHEBI:30616"/>
        <dbReference type="ChEBI" id="CHEBI:58228"/>
        <dbReference type="ChEBI" id="CHEBI:456216"/>
    </reaction>
    <physiologicalReaction direction="right-to-left" evidence="1">
        <dbReference type="Rhea" id="RHEA:30757"/>
    </physiologicalReaction>
</comment>
<comment type="catalytic activity">
    <reaction evidence="1">
        <text>hydrogencarbonate + NH4(+) = carbamate + H2O + H(+)</text>
        <dbReference type="Rhea" id="RHEA:57716"/>
        <dbReference type="ChEBI" id="CHEBI:13941"/>
        <dbReference type="ChEBI" id="CHEBI:15377"/>
        <dbReference type="ChEBI" id="CHEBI:15378"/>
        <dbReference type="ChEBI" id="CHEBI:17544"/>
        <dbReference type="ChEBI" id="CHEBI:28938"/>
    </reaction>
    <physiologicalReaction direction="right-to-left" evidence="1">
        <dbReference type="Rhea" id="RHEA:57718"/>
    </physiologicalReaction>
</comment>
<comment type="pathway">
    <text evidence="1">Nitrogen metabolism; (S)-allantoin degradation.</text>
</comment>
<comment type="subcellular location">
    <subcellularLocation>
        <location evidence="1">Cytoplasm</location>
    </subcellularLocation>
</comment>
<comment type="similarity">
    <text evidence="2">Belongs to the carbamate kinase family.</text>
</comment>
<name>ALLK_ECO57</name>
<proteinExistence type="inferred from homology"/>
<accession>Q8XCV5</accession>
<protein>
    <recommendedName>
        <fullName evidence="1">Carbamate kinase</fullName>
        <ecNumber evidence="1">2.7.2.2</ecNumber>
    </recommendedName>
    <alternativeName>
        <fullName evidence="1">Catabolic carbamate kinase</fullName>
        <shortName evidence="1">Catabolic CK</shortName>
    </alternativeName>
</protein>
<evidence type="ECO:0000250" key="1">
    <source>
        <dbReference type="UniProtKB" id="P37306"/>
    </source>
</evidence>
<evidence type="ECO:0000305" key="2"/>
<reference key="1">
    <citation type="journal article" date="2001" name="Nature">
        <title>Genome sequence of enterohaemorrhagic Escherichia coli O157:H7.</title>
        <authorList>
            <person name="Perna N.T."/>
            <person name="Plunkett G. III"/>
            <person name="Burland V."/>
            <person name="Mau B."/>
            <person name="Glasner J.D."/>
            <person name="Rose D.J."/>
            <person name="Mayhew G.F."/>
            <person name="Evans P.S."/>
            <person name="Gregor J."/>
            <person name="Kirkpatrick H.A."/>
            <person name="Posfai G."/>
            <person name="Hackett J."/>
            <person name="Klink S."/>
            <person name="Boutin A."/>
            <person name="Shao Y."/>
            <person name="Miller L."/>
            <person name="Grotbeck E.J."/>
            <person name="Davis N.W."/>
            <person name="Lim A."/>
            <person name="Dimalanta E.T."/>
            <person name="Potamousis K."/>
            <person name="Apodaca J."/>
            <person name="Anantharaman T.S."/>
            <person name="Lin J."/>
            <person name="Yen G."/>
            <person name="Schwartz D.C."/>
            <person name="Welch R.A."/>
            <person name="Blattner F.R."/>
        </authorList>
    </citation>
    <scope>NUCLEOTIDE SEQUENCE [LARGE SCALE GENOMIC DNA]</scope>
    <source>
        <strain>O157:H7 / EDL933 / ATCC 700927 / EHEC</strain>
    </source>
</reference>
<reference key="2">
    <citation type="journal article" date="2001" name="DNA Res.">
        <title>Complete genome sequence of enterohemorrhagic Escherichia coli O157:H7 and genomic comparison with a laboratory strain K-12.</title>
        <authorList>
            <person name="Hayashi T."/>
            <person name="Makino K."/>
            <person name="Ohnishi M."/>
            <person name="Kurokawa K."/>
            <person name="Ishii K."/>
            <person name="Yokoyama K."/>
            <person name="Han C.-G."/>
            <person name="Ohtsubo E."/>
            <person name="Nakayama K."/>
            <person name="Murata T."/>
            <person name="Tanaka M."/>
            <person name="Tobe T."/>
            <person name="Iida T."/>
            <person name="Takami H."/>
            <person name="Honda T."/>
            <person name="Sasakawa C."/>
            <person name="Ogasawara N."/>
            <person name="Yasunaga T."/>
            <person name="Kuhara S."/>
            <person name="Shiba T."/>
            <person name="Hattori M."/>
            <person name="Shinagawa H."/>
        </authorList>
    </citation>
    <scope>NUCLEOTIDE SEQUENCE [LARGE SCALE GENOMIC DNA]</scope>
    <source>
        <strain>O157:H7 / Sakai / RIMD 0509952 / EHEC</strain>
    </source>
</reference>
<keyword id="KW-0067">ATP-binding</keyword>
<keyword id="KW-0963">Cytoplasm</keyword>
<keyword id="KW-0418">Kinase</keyword>
<keyword id="KW-0547">Nucleotide-binding</keyword>
<keyword id="KW-1185">Reference proteome</keyword>
<keyword id="KW-0808">Transferase</keyword>
<organism>
    <name type="scientific">Escherichia coli O157:H7</name>
    <dbReference type="NCBI Taxonomy" id="83334"/>
    <lineage>
        <taxon>Bacteria</taxon>
        <taxon>Pseudomonadati</taxon>
        <taxon>Pseudomonadota</taxon>
        <taxon>Gammaproteobacteria</taxon>
        <taxon>Enterobacterales</taxon>
        <taxon>Enterobacteriaceae</taxon>
        <taxon>Escherichia</taxon>
    </lineage>
</organism>
<sequence>MKTLVVALGGNALLQRGEALTAENQYRNIASAVPALARLARSYRLAIVHGNGPQVGLLALQNLAWKEVEPYPLDVLVAESQGMIGYMLAQSLSAQPQMPPVTTVRTRIEVSPDDPAFLQPEKFIGPVYQPEEQEALEAAYGWQMKRDGKYLRRVVASPQPRKILDSEAIELLLKEGHVVICSGGGGVPVTDDGAGSEAVIDKDLAAALLAEQINADGLVILTDADAVYENWGMPQQRAIRHATPDELAPFAKADGSMGPKVTAVSGYVRSRGKPAWIGALSRIEETLAGEAGTCISL</sequence>
<feature type="chain" id="PRO_0000185121" description="Carbamate kinase">
    <location>
        <begin position="1"/>
        <end position="297"/>
    </location>
</feature>